<evidence type="ECO:0000255" key="1"/>
<evidence type="ECO:0000305" key="2"/>
<sequence length="97" mass="10419">MRIFVKAAISTAAWRFYAHPTVAMGICVGTALAYSPENTFELLKNTTYTGIEAAKFAYENTAGIVNGIAGLAHLVYDNLPSYSETPQVDLVGSIEIS</sequence>
<dbReference type="EMBL" id="AE006914">
    <property type="protein sequence ID" value="AAL03364.1"/>
    <property type="molecule type" value="Genomic_DNA"/>
</dbReference>
<dbReference type="PIR" id="B97803">
    <property type="entry name" value="B97803"/>
</dbReference>
<dbReference type="RefSeq" id="WP_010977434.1">
    <property type="nucleotide sequence ID" value="NC_003103.1"/>
</dbReference>
<dbReference type="GeneID" id="927788"/>
<dbReference type="KEGG" id="rco:RC0826"/>
<dbReference type="PATRIC" id="fig|272944.4.peg.937"/>
<dbReference type="HOGENOM" id="CLU_178535_0_0_5"/>
<dbReference type="Proteomes" id="UP000000816">
    <property type="component" value="Chromosome"/>
</dbReference>
<reference key="1">
    <citation type="journal article" date="2001" name="Science">
        <title>Mechanisms of evolution in Rickettsia conorii and R. prowazekii.</title>
        <authorList>
            <person name="Ogata H."/>
            <person name="Audic S."/>
            <person name="Renesto-Audiffren P."/>
            <person name="Fournier P.-E."/>
            <person name="Barbe V."/>
            <person name="Samson D."/>
            <person name="Roux V."/>
            <person name="Cossart P."/>
            <person name="Weissenbach J."/>
            <person name="Claverie J.-M."/>
            <person name="Raoult D."/>
        </authorList>
    </citation>
    <scope>NUCLEOTIDE SEQUENCE [LARGE SCALE GENOMIC DNA]</scope>
    <source>
        <strain>ATCC VR-613 / Malish 7</strain>
    </source>
</reference>
<comment type="similarity">
    <text evidence="2">Belongs to the UPF0416 family.</text>
</comment>
<feature type="signal peptide" evidence="1">
    <location>
        <begin position="1"/>
        <end position="33"/>
    </location>
</feature>
<feature type="chain" id="PRO_0000279868" description="UPF0416 protein RC0826">
    <location>
        <begin position="34"/>
        <end position="97"/>
    </location>
</feature>
<keyword id="KW-0732">Signal</keyword>
<proteinExistence type="inferred from homology"/>
<gene>
    <name type="ordered locus">RC0826</name>
</gene>
<name>Y826_RICCN</name>
<organism>
    <name type="scientific">Rickettsia conorii (strain ATCC VR-613 / Malish 7)</name>
    <dbReference type="NCBI Taxonomy" id="272944"/>
    <lineage>
        <taxon>Bacteria</taxon>
        <taxon>Pseudomonadati</taxon>
        <taxon>Pseudomonadota</taxon>
        <taxon>Alphaproteobacteria</taxon>
        <taxon>Rickettsiales</taxon>
        <taxon>Rickettsiaceae</taxon>
        <taxon>Rickettsieae</taxon>
        <taxon>Rickettsia</taxon>
        <taxon>spotted fever group</taxon>
    </lineage>
</organism>
<protein>
    <recommendedName>
        <fullName>UPF0416 protein RC0826</fullName>
    </recommendedName>
</protein>
<accession>Q92HE5</accession>